<name>Y675_RALN1</name>
<sequence>MASPDAPINLTNQFLIAMPGMADPTFSGTVVYLCEHNERGALGLVINRPIDIDLATLFDKIDLKLEIHPLAEQPVYYGGPVQTERGFVLHDAMGSYSSSLTVPGGLEMTTSKDVLEAVARGGGPQRFILTLGYAGWSAGQLEEEIGRNGWLTVQADPEIIFNVPAEERFAAALRLLGINPAMLSGEAGHA</sequence>
<evidence type="ECO:0000255" key="1">
    <source>
        <dbReference type="HAMAP-Rule" id="MF_00758"/>
    </source>
</evidence>
<accession>Q8Y1L5</accession>
<proteinExistence type="inferred from homology"/>
<comment type="similarity">
    <text evidence="1">Belongs to the UPF0301 (AlgH) family.</text>
</comment>
<reference key="1">
    <citation type="journal article" date="2002" name="Nature">
        <title>Genome sequence of the plant pathogen Ralstonia solanacearum.</title>
        <authorList>
            <person name="Salanoubat M."/>
            <person name="Genin S."/>
            <person name="Artiguenave F."/>
            <person name="Gouzy J."/>
            <person name="Mangenot S."/>
            <person name="Arlat M."/>
            <person name="Billault A."/>
            <person name="Brottier P."/>
            <person name="Camus J.-C."/>
            <person name="Cattolico L."/>
            <person name="Chandler M."/>
            <person name="Choisne N."/>
            <person name="Claudel-Renard C."/>
            <person name="Cunnac S."/>
            <person name="Demange N."/>
            <person name="Gaspin C."/>
            <person name="Lavie M."/>
            <person name="Moisan A."/>
            <person name="Robert C."/>
            <person name="Saurin W."/>
            <person name="Schiex T."/>
            <person name="Siguier P."/>
            <person name="Thebault P."/>
            <person name="Whalen M."/>
            <person name="Wincker P."/>
            <person name="Levy M."/>
            <person name="Weissenbach J."/>
            <person name="Boucher C.A."/>
        </authorList>
    </citation>
    <scope>NUCLEOTIDE SEQUENCE [LARGE SCALE GENOMIC DNA]</scope>
    <source>
        <strain>ATCC BAA-1114 / GMI1000</strain>
    </source>
</reference>
<dbReference type="EMBL" id="AL646052">
    <property type="protein sequence ID" value="CAD14205.1"/>
    <property type="molecule type" value="Genomic_DNA"/>
</dbReference>
<dbReference type="RefSeq" id="WP_011000630.1">
    <property type="nucleotide sequence ID" value="NC_003295.1"/>
</dbReference>
<dbReference type="SMR" id="Q8Y1L5"/>
<dbReference type="STRING" id="267608.RSc0675"/>
<dbReference type="EnsemblBacteria" id="CAD14205">
    <property type="protein sequence ID" value="CAD14205"/>
    <property type="gene ID" value="RSc0675"/>
</dbReference>
<dbReference type="KEGG" id="rso:RSc0675"/>
<dbReference type="eggNOG" id="COG1678">
    <property type="taxonomic scope" value="Bacteria"/>
</dbReference>
<dbReference type="HOGENOM" id="CLU_057596_1_0_4"/>
<dbReference type="Proteomes" id="UP000001436">
    <property type="component" value="Chromosome"/>
</dbReference>
<dbReference type="GO" id="GO:0005829">
    <property type="term" value="C:cytosol"/>
    <property type="evidence" value="ECO:0007669"/>
    <property type="project" value="TreeGrafter"/>
</dbReference>
<dbReference type="Gene3D" id="3.40.1740.10">
    <property type="entry name" value="VC0467-like"/>
    <property type="match status" value="1"/>
</dbReference>
<dbReference type="HAMAP" id="MF_00758">
    <property type="entry name" value="UPF0301"/>
    <property type="match status" value="1"/>
</dbReference>
<dbReference type="InterPro" id="IPR003774">
    <property type="entry name" value="AlgH-like"/>
</dbReference>
<dbReference type="NCBIfam" id="NF001266">
    <property type="entry name" value="PRK00228.1-1"/>
    <property type="match status" value="1"/>
</dbReference>
<dbReference type="NCBIfam" id="NF001267">
    <property type="entry name" value="PRK00228.1-2"/>
    <property type="match status" value="1"/>
</dbReference>
<dbReference type="PANTHER" id="PTHR30327">
    <property type="entry name" value="UNCHARACTERIZED PROTEIN YQGE"/>
    <property type="match status" value="1"/>
</dbReference>
<dbReference type="PANTHER" id="PTHR30327:SF1">
    <property type="entry name" value="UPF0301 PROTEIN YQGE"/>
    <property type="match status" value="1"/>
</dbReference>
<dbReference type="Pfam" id="PF02622">
    <property type="entry name" value="DUF179"/>
    <property type="match status" value="1"/>
</dbReference>
<dbReference type="SUPFAM" id="SSF143456">
    <property type="entry name" value="VC0467-like"/>
    <property type="match status" value="1"/>
</dbReference>
<feature type="chain" id="PRO_0000214339" description="UPF0301 protein RSc0675">
    <location>
        <begin position="1"/>
        <end position="190"/>
    </location>
</feature>
<protein>
    <recommendedName>
        <fullName evidence="1">UPF0301 protein RSc0675</fullName>
    </recommendedName>
</protein>
<keyword id="KW-1185">Reference proteome</keyword>
<gene>
    <name type="ordered locus">RSc0675</name>
    <name type="ORF">RS01580</name>
</gene>
<organism>
    <name type="scientific">Ralstonia nicotianae (strain ATCC BAA-1114 / GMI1000)</name>
    <name type="common">Ralstonia solanacearum</name>
    <dbReference type="NCBI Taxonomy" id="267608"/>
    <lineage>
        <taxon>Bacteria</taxon>
        <taxon>Pseudomonadati</taxon>
        <taxon>Pseudomonadota</taxon>
        <taxon>Betaproteobacteria</taxon>
        <taxon>Burkholderiales</taxon>
        <taxon>Burkholderiaceae</taxon>
        <taxon>Ralstonia</taxon>
        <taxon>Ralstonia solanacearum species complex</taxon>
    </lineage>
</organism>